<dbReference type="EC" id="6.2.1.5" evidence="1"/>
<dbReference type="EMBL" id="AE000666">
    <property type="protein sequence ID" value="AAB85069.1"/>
    <property type="molecule type" value="Genomic_DNA"/>
</dbReference>
<dbReference type="PIR" id="E69174">
    <property type="entry name" value="E69174"/>
</dbReference>
<dbReference type="SMR" id="O26663"/>
<dbReference type="FunCoup" id="O26663">
    <property type="interactions" value="204"/>
</dbReference>
<dbReference type="STRING" id="187420.MTH_563"/>
<dbReference type="PaxDb" id="187420-MTH_563"/>
<dbReference type="EnsemblBacteria" id="AAB85069">
    <property type="protein sequence ID" value="AAB85069"/>
    <property type="gene ID" value="MTH_563"/>
</dbReference>
<dbReference type="KEGG" id="mth:MTH_563"/>
<dbReference type="PATRIC" id="fig|187420.15.peg.543"/>
<dbReference type="HOGENOM" id="CLU_052104_0_0_2"/>
<dbReference type="InParanoid" id="O26663"/>
<dbReference type="UniPathway" id="UPA00223">
    <property type="reaction ID" value="UER00999"/>
</dbReference>
<dbReference type="Proteomes" id="UP000005223">
    <property type="component" value="Chromosome"/>
</dbReference>
<dbReference type="GO" id="GO:0009361">
    <property type="term" value="C:succinate-CoA ligase complex (ADP-forming)"/>
    <property type="evidence" value="ECO:0007669"/>
    <property type="project" value="TreeGrafter"/>
</dbReference>
<dbReference type="GO" id="GO:0000166">
    <property type="term" value="F:nucleotide binding"/>
    <property type="evidence" value="ECO:0007669"/>
    <property type="project" value="UniProtKB-KW"/>
</dbReference>
<dbReference type="GO" id="GO:0004775">
    <property type="term" value="F:succinate-CoA ligase (ADP-forming) activity"/>
    <property type="evidence" value="ECO:0007669"/>
    <property type="project" value="UniProtKB-UniRule"/>
</dbReference>
<dbReference type="GO" id="GO:0004776">
    <property type="term" value="F:succinate-CoA ligase (GDP-forming) activity"/>
    <property type="evidence" value="ECO:0007669"/>
    <property type="project" value="TreeGrafter"/>
</dbReference>
<dbReference type="GO" id="GO:0006099">
    <property type="term" value="P:tricarboxylic acid cycle"/>
    <property type="evidence" value="ECO:0007669"/>
    <property type="project" value="UniProtKB-UniRule"/>
</dbReference>
<dbReference type="FunFam" id="3.40.50.261:FF:000006">
    <property type="entry name" value="Succinate--CoA ligase [ADP-forming] subunit alpha"/>
    <property type="match status" value="1"/>
</dbReference>
<dbReference type="FunFam" id="3.40.50.720:FF:000277">
    <property type="entry name" value="Succinate--CoA ligase [ADP-forming] subunit alpha"/>
    <property type="match status" value="1"/>
</dbReference>
<dbReference type="Gene3D" id="3.40.50.720">
    <property type="entry name" value="NAD(P)-binding Rossmann-like Domain"/>
    <property type="match status" value="1"/>
</dbReference>
<dbReference type="Gene3D" id="3.40.50.261">
    <property type="entry name" value="Succinyl-CoA synthetase domains"/>
    <property type="match status" value="1"/>
</dbReference>
<dbReference type="HAMAP" id="MF_01988">
    <property type="entry name" value="Succ_CoA_alpha"/>
    <property type="match status" value="1"/>
</dbReference>
<dbReference type="InterPro" id="IPR017440">
    <property type="entry name" value="Cit_synth/succinyl-CoA_lig_AS"/>
</dbReference>
<dbReference type="InterPro" id="IPR033847">
    <property type="entry name" value="Citrt_syn/SCS-alpha_CS"/>
</dbReference>
<dbReference type="InterPro" id="IPR003781">
    <property type="entry name" value="CoA-bd"/>
</dbReference>
<dbReference type="InterPro" id="IPR005810">
    <property type="entry name" value="CoA_lig_alpha"/>
</dbReference>
<dbReference type="InterPro" id="IPR036291">
    <property type="entry name" value="NAD(P)-bd_dom_sf"/>
</dbReference>
<dbReference type="InterPro" id="IPR005811">
    <property type="entry name" value="SUCC_ACL_C"/>
</dbReference>
<dbReference type="InterPro" id="IPR016102">
    <property type="entry name" value="Succinyl-CoA_synth-like"/>
</dbReference>
<dbReference type="NCBIfam" id="NF004230">
    <property type="entry name" value="PRK05678.1"/>
    <property type="match status" value="1"/>
</dbReference>
<dbReference type="NCBIfam" id="TIGR01019">
    <property type="entry name" value="sucCoAalpha"/>
    <property type="match status" value="1"/>
</dbReference>
<dbReference type="PANTHER" id="PTHR11117:SF2">
    <property type="entry name" value="SUCCINATE--COA LIGASE [ADP_GDP-FORMING] SUBUNIT ALPHA, MITOCHONDRIAL"/>
    <property type="match status" value="1"/>
</dbReference>
<dbReference type="PANTHER" id="PTHR11117">
    <property type="entry name" value="SUCCINYL-COA LIGASE SUBUNIT ALPHA"/>
    <property type="match status" value="1"/>
</dbReference>
<dbReference type="Pfam" id="PF02629">
    <property type="entry name" value="CoA_binding"/>
    <property type="match status" value="1"/>
</dbReference>
<dbReference type="Pfam" id="PF00549">
    <property type="entry name" value="Ligase_CoA"/>
    <property type="match status" value="1"/>
</dbReference>
<dbReference type="PIRSF" id="PIRSF001553">
    <property type="entry name" value="SucCS_alpha"/>
    <property type="match status" value="1"/>
</dbReference>
<dbReference type="PRINTS" id="PR01798">
    <property type="entry name" value="SCOASYNTHASE"/>
</dbReference>
<dbReference type="SMART" id="SM00881">
    <property type="entry name" value="CoA_binding"/>
    <property type="match status" value="1"/>
</dbReference>
<dbReference type="SUPFAM" id="SSF51735">
    <property type="entry name" value="NAD(P)-binding Rossmann-fold domains"/>
    <property type="match status" value="1"/>
</dbReference>
<dbReference type="SUPFAM" id="SSF52210">
    <property type="entry name" value="Succinyl-CoA synthetase domains"/>
    <property type="match status" value="1"/>
</dbReference>
<dbReference type="PROSITE" id="PS01216">
    <property type="entry name" value="SUCCINYL_COA_LIG_1"/>
    <property type="match status" value="1"/>
</dbReference>
<dbReference type="PROSITE" id="PS00399">
    <property type="entry name" value="SUCCINYL_COA_LIG_2"/>
    <property type="match status" value="1"/>
</dbReference>
<proteinExistence type="inferred from homology"/>
<protein>
    <recommendedName>
        <fullName evidence="1">Succinate--CoA ligase [ADP-forming] subunit alpha</fullName>
        <ecNumber evidence="1">6.2.1.5</ecNumber>
    </recommendedName>
    <alternativeName>
        <fullName evidence="1">Succinyl-CoA synthetase subunit alpha</fullName>
        <shortName evidence="1">SCS-alpha</shortName>
    </alternativeName>
</protein>
<keyword id="KW-0436">Ligase</keyword>
<keyword id="KW-0547">Nucleotide-binding</keyword>
<keyword id="KW-1185">Reference proteome</keyword>
<keyword id="KW-0816">Tricarboxylic acid cycle</keyword>
<gene>
    <name evidence="1" type="primary">sucD</name>
    <name type="ordered locus">MTH_563</name>
</gene>
<feature type="chain" id="PRO_0000102811" description="Succinate--CoA ligase [ADP-forming] subunit alpha">
    <location>
        <begin position="1"/>
        <end position="293"/>
    </location>
</feature>
<feature type="active site" description="Tele-phosphohistidine intermediate" evidence="1">
    <location>
        <position position="249"/>
    </location>
</feature>
<feature type="binding site" evidence="1">
    <location>
        <begin position="21"/>
        <end position="24"/>
    </location>
    <ligand>
        <name>CoA</name>
        <dbReference type="ChEBI" id="CHEBI:57287"/>
    </ligand>
</feature>
<feature type="binding site" evidence="1">
    <location>
        <position position="47"/>
    </location>
    <ligand>
        <name>CoA</name>
        <dbReference type="ChEBI" id="CHEBI:57287"/>
    </ligand>
</feature>
<feature type="binding site" evidence="1">
    <location>
        <begin position="99"/>
        <end position="101"/>
    </location>
    <ligand>
        <name>CoA</name>
        <dbReference type="ChEBI" id="CHEBI:57287"/>
    </ligand>
</feature>
<feature type="binding site" evidence="1">
    <location>
        <position position="162"/>
    </location>
    <ligand>
        <name>substrate</name>
        <note>ligand shared with subunit beta</note>
    </ligand>
</feature>
<reference key="1">
    <citation type="journal article" date="1997" name="J. Bacteriol.">
        <title>Complete genome sequence of Methanobacterium thermoautotrophicum deltaH: functional analysis and comparative genomics.</title>
        <authorList>
            <person name="Smith D.R."/>
            <person name="Doucette-Stamm L.A."/>
            <person name="Deloughery C."/>
            <person name="Lee H.-M."/>
            <person name="Dubois J."/>
            <person name="Aldredge T."/>
            <person name="Bashirzadeh R."/>
            <person name="Blakely D."/>
            <person name="Cook R."/>
            <person name="Gilbert K."/>
            <person name="Harrison D."/>
            <person name="Hoang L."/>
            <person name="Keagle P."/>
            <person name="Lumm W."/>
            <person name="Pothier B."/>
            <person name="Qiu D."/>
            <person name="Spadafora R."/>
            <person name="Vicare R."/>
            <person name="Wang Y."/>
            <person name="Wierzbowski J."/>
            <person name="Gibson R."/>
            <person name="Jiwani N."/>
            <person name="Caruso A."/>
            <person name="Bush D."/>
            <person name="Safer H."/>
            <person name="Patwell D."/>
            <person name="Prabhakar S."/>
            <person name="McDougall S."/>
            <person name="Shimer G."/>
            <person name="Goyal A."/>
            <person name="Pietrovski S."/>
            <person name="Church G.M."/>
            <person name="Daniels C.J."/>
            <person name="Mao J.-I."/>
            <person name="Rice P."/>
            <person name="Noelling J."/>
            <person name="Reeve J.N."/>
        </authorList>
    </citation>
    <scope>NUCLEOTIDE SEQUENCE [LARGE SCALE GENOMIC DNA]</scope>
    <source>
        <strain>ATCC 29096 / DSM 1053 / JCM 10044 / NBRC 100330 / Delta H</strain>
    </source>
</reference>
<evidence type="ECO:0000255" key="1">
    <source>
        <dbReference type="HAMAP-Rule" id="MF_01988"/>
    </source>
</evidence>
<accession>O26663</accession>
<sequence>MRGSIMILLDEDTRCLVQGITGKQGSFHTRQMLEYGTRIVAGVTPGKGGQEFLGVDVYNSVEEVTEEMDVNASIIFVPAPFAKDAAFESIKHLDLVVIITEHIPVHDSMQIMEYASRMGKTVIGPNTPGIITPGIGKLGIMPTHIFTEGTIGIVSRSGTLTYEFAAQLTEAGFGQSTCVGIGGDPVTGLGFVDVLERFEDDPGTDAVVLIGEIGGDAEERAASYIEQMSKPVFAFISGATAPPGKRMGHAGAIIEGGTGTASSKREALEAAGAVVVDRPSAIVDEIRAQLGVR</sequence>
<name>SUCD_METTH</name>
<comment type="function">
    <text evidence="1">Succinyl-CoA synthetase functions in the citric acid cycle (TCA), coupling the hydrolysis of succinyl-CoA to the synthesis of either ATP or GTP and thus represents the only step of substrate-level phosphorylation in the TCA. The alpha subunit of the enzyme binds the substrates coenzyme A and phosphate, while succinate binding and nucleotide specificity is provided by the beta subunit.</text>
</comment>
<comment type="catalytic activity">
    <reaction evidence="1">
        <text>succinate + ATP + CoA = succinyl-CoA + ADP + phosphate</text>
        <dbReference type="Rhea" id="RHEA:17661"/>
        <dbReference type="ChEBI" id="CHEBI:30031"/>
        <dbReference type="ChEBI" id="CHEBI:30616"/>
        <dbReference type="ChEBI" id="CHEBI:43474"/>
        <dbReference type="ChEBI" id="CHEBI:57287"/>
        <dbReference type="ChEBI" id="CHEBI:57292"/>
        <dbReference type="ChEBI" id="CHEBI:456216"/>
        <dbReference type="EC" id="6.2.1.5"/>
    </reaction>
    <physiologicalReaction direction="right-to-left" evidence="1">
        <dbReference type="Rhea" id="RHEA:17663"/>
    </physiologicalReaction>
</comment>
<comment type="catalytic activity">
    <reaction evidence="1">
        <text>GTP + succinate + CoA = succinyl-CoA + GDP + phosphate</text>
        <dbReference type="Rhea" id="RHEA:22120"/>
        <dbReference type="ChEBI" id="CHEBI:30031"/>
        <dbReference type="ChEBI" id="CHEBI:37565"/>
        <dbReference type="ChEBI" id="CHEBI:43474"/>
        <dbReference type="ChEBI" id="CHEBI:57287"/>
        <dbReference type="ChEBI" id="CHEBI:57292"/>
        <dbReference type="ChEBI" id="CHEBI:58189"/>
    </reaction>
    <physiologicalReaction direction="right-to-left" evidence="1">
        <dbReference type="Rhea" id="RHEA:22122"/>
    </physiologicalReaction>
</comment>
<comment type="pathway">
    <text evidence="1">Carbohydrate metabolism; tricarboxylic acid cycle; succinate from succinyl-CoA (ligase route): step 1/1.</text>
</comment>
<comment type="subunit">
    <text evidence="1">Heterotetramer of two alpha and two beta subunits.</text>
</comment>
<comment type="similarity">
    <text evidence="1">Belongs to the succinate/malate CoA ligase alpha subunit family.</text>
</comment>
<organism>
    <name type="scientific">Methanothermobacter thermautotrophicus (strain ATCC 29096 / DSM 1053 / JCM 10044 / NBRC 100330 / Delta H)</name>
    <name type="common">Methanobacterium thermoautotrophicum</name>
    <dbReference type="NCBI Taxonomy" id="187420"/>
    <lineage>
        <taxon>Archaea</taxon>
        <taxon>Methanobacteriati</taxon>
        <taxon>Methanobacteriota</taxon>
        <taxon>Methanomada group</taxon>
        <taxon>Methanobacteria</taxon>
        <taxon>Methanobacteriales</taxon>
        <taxon>Methanobacteriaceae</taxon>
        <taxon>Methanothermobacter</taxon>
    </lineage>
</organism>